<feature type="chain" id="PRO_0000167222" description="Small ribosomal subunit protein bS16">
    <location>
        <begin position="1"/>
        <end position="192"/>
    </location>
</feature>
<feature type="region of interest" description="Disordered" evidence="2">
    <location>
        <begin position="153"/>
        <end position="192"/>
    </location>
</feature>
<feature type="compositionally biased region" description="Low complexity" evidence="2">
    <location>
        <begin position="178"/>
        <end position="192"/>
    </location>
</feature>
<name>RS16_PORGI</name>
<keyword id="KW-1185">Reference proteome</keyword>
<keyword id="KW-0687">Ribonucleoprotein</keyword>
<keyword id="KW-0689">Ribosomal protein</keyword>
<evidence type="ECO:0000255" key="1">
    <source>
        <dbReference type="HAMAP-Rule" id="MF_00385"/>
    </source>
</evidence>
<evidence type="ECO:0000256" key="2">
    <source>
        <dbReference type="SAM" id="MobiDB-lite"/>
    </source>
</evidence>
<evidence type="ECO:0000305" key="3"/>
<accession>Q7MT66</accession>
<dbReference type="EMBL" id="AE015924">
    <property type="protein sequence ID" value="AAQ67074.1"/>
    <property type="molecule type" value="Genomic_DNA"/>
</dbReference>
<dbReference type="RefSeq" id="WP_005873713.1">
    <property type="nucleotide sequence ID" value="NC_002950.2"/>
</dbReference>
<dbReference type="SMR" id="Q7MT66"/>
<dbReference type="STRING" id="242619.PG_2117"/>
<dbReference type="EnsemblBacteria" id="AAQ67074">
    <property type="protein sequence ID" value="AAQ67074"/>
    <property type="gene ID" value="PG_2117"/>
</dbReference>
<dbReference type="KEGG" id="pgi:PG_2117"/>
<dbReference type="PATRIC" id="fig|242619.8.peg.1972"/>
<dbReference type="eggNOG" id="COG0228">
    <property type="taxonomic scope" value="Bacteria"/>
</dbReference>
<dbReference type="HOGENOM" id="CLU_100590_0_0_10"/>
<dbReference type="BioCyc" id="PGIN242619:G1G02-1987-MONOMER"/>
<dbReference type="Proteomes" id="UP000000588">
    <property type="component" value="Chromosome"/>
</dbReference>
<dbReference type="GO" id="GO:0005737">
    <property type="term" value="C:cytoplasm"/>
    <property type="evidence" value="ECO:0007669"/>
    <property type="project" value="UniProtKB-ARBA"/>
</dbReference>
<dbReference type="GO" id="GO:0015935">
    <property type="term" value="C:small ribosomal subunit"/>
    <property type="evidence" value="ECO:0007669"/>
    <property type="project" value="TreeGrafter"/>
</dbReference>
<dbReference type="GO" id="GO:0003735">
    <property type="term" value="F:structural constituent of ribosome"/>
    <property type="evidence" value="ECO:0007669"/>
    <property type="project" value="InterPro"/>
</dbReference>
<dbReference type="GO" id="GO:0006412">
    <property type="term" value="P:translation"/>
    <property type="evidence" value="ECO:0007669"/>
    <property type="project" value="UniProtKB-UniRule"/>
</dbReference>
<dbReference type="Gene3D" id="3.30.1320.10">
    <property type="match status" value="1"/>
</dbReference>
<dbReference type="HAMAP" id="MF_00385">
    <property type="entry name" value="Ribosomal_bS16"/>
    <property type="match status" value="1"/>
</dbReference>
<dbReference type="InterPro" id="IPR000307">
    <property type="entry name" value="Ribosomal_bS16"/>
</dbReference>
<dbReference type="InterPro" id="IPR023803">
    <property type="entry name" value="Ribosomal_bS16_dom_sf"/>
</dbReference>
<dbReference type="NCBIfam" id="NF011094">
    <property type="entry name" value="PRK14521.1"/>
    <property type="match status" value="1"/>
</dbReference>
<dbReference type="NCBIfam" id="TIGR00002">
    <property type="entry name" value="S16"/>
    <property type="match status" value="1"/>
</dbReference>
<dbReference type="PANTHER" id="PTHR12919">
    <property type="entry name" value="30S RIBOSOMAL PROTEIN S16"/>
    <property type="match status" value="1"/>
</dbReference>
<dbReference type="PANTHER" id="PTHR12919:SF20">
    <property type="entry name" value="SMALL RIBOSOMAL SUBUNIT PROTEIN BS16M"/>
    <property type="match status" value="1"/>
</dbReference>
<dbReference type="Pfam" id="PF00886">
    <property type="entry name" value="Ribosomal_S16"/>
    <property type="match status" value="1"/>
</dbReference>
<dbReference type="SUPFAM" id="SSF54565">
    <property type="entry name" value="Ribosomal protein S16"/>
    <property type="match status" value="1"/>
</dbReference>
<sequence length="192" mass="20669">MATKIRLQRHGRKGYAFYKIVVADSRAPRDGKFIERIGSYNPNTNPATIDLNFERALYWIGVGAQPTDTARNILSREGVLMMKHLLGGVKKGAFDQAAAENKFEAWLKGKKDALNNMKAKVKEAAVADDKVKLEAEKAVNKARAEAVAEKKAAEAKAKAEAEAAAAAEEAAETEETPVEAAAEEAPAAESAE</sequence>
<proteinExistence type="inferred from homology"/>
<gene>
    <name evidence="1" type="primary">rpsP</name>
    <name type="ordered locus">PG_2117</name>
</gene>
<protein>
    <recommendedName>
        <fullName evidence="1">Small ribosomal subunit protein bS16</fullName>
    </recommendedName>
    <alternativeName>
        <fullName evidence="3">30S ribosomal protein S16</fullName>
    </alternativeName>
</protein>
<reference key="1">
    <citation type="journal article" date="2003" name="J. Bacteriol.">
        <title>Complete genome sequence of the oral pathogenic bacterium Porphyromonas gingivalis strain W83.</title>
        <authorList>
            <person name="Nelson K.E."/>
            <person name="Fleischmann R.D."/>
            <person name="DeBoy R.T."/>
            <person name="Paulsen I.T."/>
            <person name="Fouts D.E."/>
            <person name="Eisen J.A."/>
            <person name="Daugherty S.C."/>
            <person name="Dodson R.J."/>
            <person name="Durkin A.S."/>
            <person name="Gwinn M.L."/>
            <person name="Haft D.H."/>
            <person name="Kolonay J.F."/>
            <person name="Nelson W.C."/>
            <person name="Mason T.M."/>
            <person name="Tallon L."/>
            <person name="Gray J."/>
            <person name="Granger D."/>
            <person name="Tettelin H."/>
            <person name="Dong H."/>
            <person name="Galvin J.L."/>
            <person name="Duncan M.J."/>
            <person name="Dewhirst F.E."/>
            <person name="Fraser C.M."/>
        </authorList>
    </citation>
    <scope>NUCLEOTIDE SEQUENCE [LARGE SCALE GENOMIC DNA]</scope>
    <source>
        <strain>ATCC BAA-308 / W83</strain>
    </source>
</reference>
<organism>
    <name type="scientific">Porphyromonas gingivalis (strain ATCC BAA-308 / W83)</name>
    <dbReference type="NCBI Taxonomy" id="242619"/>
    <lineage>
        <taxon>Bacteria</taxon>
        <taxon>Pseudomonadati</taxon>
        <taxon>Bacteroidota</taxon>
        <taxon>Bacteroidia</taxon>
        <taxon>Bacteroidales</taxon>
        <taxon>Porphyromonadaceae</taxon>
        <taxon>Porphyromonas</taxon>
    </lineage>
</organism>
<comment type="similarity">
    <text evidence="1">Belongs to the bacterial ribosomal protein bS16 family.</text>
</comment>